<dbReference type="EC" id="3.1.1.5"/>
<dbReference type="EMBL" id="L42023">
    <property type="protein sequence ID" value="AAC22305.1"/>
    <property type="molecule type" value="Genomic_DNA"/>
</dbReference>
<dbReference type="PIR" id="A64084">
    <property type="entry name" value="A64084"/>
</dbReference>
<dbReference type="RefSeq" id="NP_438805.1">
    <property type="nucleotide sequence ID" value="NC_000907.1"/>
</dbReference>
<dbReference type="SMR" id="P44800"/>
<dbReference type="STRING" id="71421.HI_0645"/>
<dbReference type="ESTHER" id="haein-pldb">
    <property type="family name" value="Monoglyceridelipase_lysophospholip"/>
</dbReference>
<dbReference type="EnsemblBacteria" id="AAC22305">
    <property type="protein sequence ID" value="AAC22305"/>
    <property type="gene ID" value="HI_0645"/>
</dbReference>
<dbReference type="KEGG" id="hin:HI_0645"/>
<dbReference type="PATRIC" id="fig|71421.8.peg.674"/>
<dbReference type="eggNOG" id="COG2267">
    <property type="taxonomic scope" value="Bacteria"/>
</dbReference>
<dbReference type="HOGENOM" id="CLU_026209_10_1_6"/>
<dbReference type="OrthoDB" id="9788260at2"/>
<dbReference type="PhylomeDB" id="P44800"/>
<dbReference type="BioCyc" id="HINF71421:G1GJ1-680-MONOMER"/>
<dbReference type="Proteomes" id="UP000000579">
    <property type="component" value="Chromosome"/>
</dbReference>
<dbReference type="GO" id="GO:0016020">
    <property type="term" value="C:membrane"/>
    <property type="evidence" value="ECO:0000318"/>
    <property type="project" value="GO_Central"/>
</dbReference>
<dbReference type="GO" id="GO:0005886">
    <property type="term" value="C:plasma membrane"/>
    <property type="evidence" value="ECO:0007669"/>
    <property type="project" value="UniProtKB-SubCell"/>
</dbReference>
<dbReference type="GO" id="GO:0004622">
    <property type="term" value="F:lysophospholipase activity"/>
    <property type="evidence" value="ECO:0000318"/>
    <property type="project" value="GO_Central"/>
</dbReference>
<dbReference type="GO" id="GO:0006629">
    <property type="term" value="P:lipid metabolic process"/>
    <property type="evidence" value="ECO:0007669"/>
    <property type="project" value="UniProtKB-KW"/>
</dbReference>
<dbReference type="FunFam" id="3.40.50.1820:FF:000020">
    <property type="entry name" value="Lysophospholipase L2"/>
    <property type="match status" value="1"/>
</dbReference>
<dbReference type="Gene3D" id="3.40.50.1820">
    <property type="entry name" value="alpha/beta hydrolase"/>
    <property type="match status" value="1"/>
</dbReference>
<dbReference type="InterPro" id="IPR000073">
    <property type="entry name" value="AB_hydrolase_1"/>
</dbReference>
<dbReference type="InterPro" id="IPR029058">
    <property type="entry name" value="AB_hydrolase_fold"/>
</dbReference>
<dbReference type="InterPro" id="IPR051044">
    <property type="entry name" value="MAG_DAG_Lipase"/>
</dbReference>
<dbReference type="PANTHER" id="PTHR11614">
    <property type="entry name" value="PHOSPHOLIPASE-RELATED"/>
    <property type="match status" value="1"/>
</dbReference>
<dbReference type="Pfam" id="PF00561">
    <property type="entry name" value="Abhydrolase_1"/>
    <property type="match status" value="1"/>
</dbReference>
<dbReference type="SUPFAM" id="SSF53474">
    <property type="entry name" value="alpha/beta-Hydrolases"/>
    <property type="match status" value="1"/>
</dbReference>
<name>PLDB_HAEIN</name>
<organism>
    <name type="scientific">Haemophilus influenzae (strain ATCC 51907 / DSM 11121 / KW20 / Rd)</name>
    <dbReference type="NCBI Taxonomy" id="71421"/>
    <lineage>
        <taxon>Bacteria</taxon>
        <taxon>Pseudomonadati</taxon>
        <taxon>Pseudomonadota</taxon>
        <taxon>Gammaproteobacteria</taxon>
        <taxon>Pasteurellales</taxon>
        <taxon>Pasteurellaceae</taxon>
        <taxon>Haemophilus</taxon>
    </lineage>
</organism>
<evidence type="ECO:0000250" key="1"/>
<reference key="1">
    <citation type="journal article" date="1995" name="Science">
        <title>Whole-genome random sequencing and assembly of Haemophilus influenzae Rd.</title>
        <authorList>
            <person name="Fleischmann R.D."/>
            <person name="Adams M.D."/>
            <person name="White O."/>
            <person name="Clayton R.A."/>
            <person name="Kirkness E.F."/>
            <person name="Kerlavage A.R."/>
            <person name="Bult C.J."/>
            <person name="Tomb J.-F."/>
            <person name="Dougherty B.A."/>
            <person name="Merrick J.M."/>
            <person name="McKenney K."/>
            <person name="Sutton G.G."/>
            <person name="FitzHugh W."/>
            <person name="Fields C.A."/>
            <person name="Gocayne J.D."/>
            <person name="Scott J.D."/>
            <person name="Shirley R."/>
            <person name="Liu L.-I."/>
            <person name="Glodek A."/>
            <person name="Kelley J.M."/>
            <person name="Weidman J.F."/>
            <person name="Phillips C.A."/>
            <person name="Spriggs T."/>
            <person name="Hedblom E."/>
            <person name="Cotton M.D."/>
            <person name="Utterback T.R."/>
            <person name="Hanna M.C."/>
            <person name="Nguyen D.T."/>
            <person name="Saudek D.M."/>
            <person name="Brandon R.C."/>
            <person name="Fine L.D."/>
            <person name="Fritchman J.L."/>
            <person name="Fuhrmann J.L."/>
            <person name="Geoghagen N.S.M."/>
            <person name="Gnehm C.L."/>
            <person name="McDonald L.A."/>
            <person name="Small K.V."/>
            <person name="Fraser C.M."/>
            <person name="Smith H.O."/>
            <person name="Venter J.C."/>
        </authorList>
    </citation>
    <scope>NUCLEOTIDE SEQUENCE [LARGE SCALE GENOMIC DNA]</scope>
    <source>
        <strain>ATCC 51907 / DSM 11121 / KW20 / Rd</strain>
    </source>
</reference>
<proteinExistence type="inferred from homology"/>
<comment type="catalytic activity">
    <reaction>
        <text>a 1-acyl-sn-glycero-3-phosphocholine + H2O = sn-glycerol 3-phosphocholine + a fatty acid + H(+)</text>
        <dbReference type="Rhea" id="RHEA:15177"/>
        <dbReference type="ChEBI" id="CHEBI:15377"/>
        <dbReference type="ChEBI" id="CHEBI:15378"/>
        <dbReference type="ChEBI" id="CHEBI:16870"/>
        <dbReference type="ChEBI" id="CHEBI:28868"/>
        <dbReference type="ChEBI" id="CHEBI:58168"/>
        <dbReference type="EC" id="3.1.1.5"/>
    </reaction>
</comment>
<comment type="subcellular location">
    <subcellularLocation>
        <location evidence="1">Cell inner membrane</location>
    </subcellularLocation>
</comment>
<feature type="chain" id="PRO_0000058457" description="Probable lysophospholipase L2">
    <location>
        <begin position="1"/>
        <end position="313"/>
    </location>
</feature>
<keyword id="KW-0997">Cell inner membrane</keyword>
<keyword id="KW-1003">Cell membrane</keyword>
<keyword id="KW-0378">Hydrolase</keyword>
<keyword id="KW-0444">Lipid biosynthesis</keyword>
<keyword id="KW-0443">Lipid metabolism</keyword>
<keyword id="KW-0472">Membrane</keyword>
<keyword id="KW-1185">Reference proteome</keyword>
<protein>
    <recommendedName>
        <fullName>Probable lysophospholipase L2</fullName>
        <ecNumber>3.1.1.5</ecNumber>
    </recommendedName>
    <alternativeName>
        <fullName>Lecithinase B</fullName>
    </alternativeName>
</protein>
<gene>
    <name type="primary">pldB</name>
    <name type="ordered locus">HI_0645</name>
</gene>
<accession>P44800</accession>
<sequence>MIREPYFHQFALAELLPFFEQFPTQYLSGKRNIKLAYRHLIQPESAVRKLMILVNGRAENMLKWSELAYDFYHQGYDVLLFDHRGQGYSQRIIPQKGHLDEFRFYVDDMAKIIEKVTALFSYSTQHLLAHSMGALIATYYLANYDHHINKAVLSSPFYGILLKHPIRDELIITLMNILGQGERYVFGKGAYQQAHLEYNELTFCKTRMKWMNRINRKNPAINLGGPTFRWVHLCLNAIKRLPKVIPKIEIPILILQAEKEKIVDNKNLEKLTALFPNARCEVILNAKHEVLFEKDNVRRNVLKSVNHFLNVQS</sequence>